<comment type="function">
    <text evidence="2">Receptor-regulated SMAD (R-SMAD) that is an intracellular signal transducer and transcriptional modulator activated by TGF-beta (transforming growth factor) and activin type 1 receptor kinases. Binds the TRE element in the promoter region of many genes that are regulated by TGF-beta and, on formation of the SMAD3/SMAD4 complex, activates transcription. Also can form a SMAD3/SMAD4/JUN/FOS complex at the AP-1/SMAD site to regulate TGF-beta-mediated transcription. Has an inhibitory effect on wound healing probably by modulating both growth and migration of primary keratinocytes and by altering the TGF-mediated chemotaxis of monocytes. This effect on wound healing appears to be hormone-sensitive. Regulator of chondrogenesis and osteogenesis and inhibits early healing of bone fractures. Positively regulates PDPK1 kinase activity by stimulating its dissociation from the 14-3-3 protein YWHAQ which acts as a negative regulator.</text>
</comment>
<comment type="subunit">
    <text evidence="2 3 4">Monomer; in the absence of TGF-beta (By similarity). Homooligomer; in the presence of TGF-beta (By similarity). Heterotrimer; forms a heterotrimer in the presence of TGF-beta consisting of two molecules of C-terminally phosphorylated SMAD2 or SMAD3 and one of SMAD4 to form the transcriptionally active SMAD2/SMAD3-SMAD4 complex (By similarity). Part of a complex consisting of MAGI2/ARIP1, ACVR2A, ACVR1B and SMAD3 (By similarity). Forms a complex with SMAD2 and TRIM33 upon addition of TGF-beta (By similarity). Found in a complex composed of SMAD3, RAN and XPO4; within the complex interacts directly with XPO4 (By similarity). Component of the multimeric complex SMAD3/SMAD4/JUN/FOS which forms at the AP1 promoter site; required for synergistic transcriptional activity in response to TGF-beta (By similarity). Part of a ternary complex composed of SMAD3, ITCH/AIP4 and NEDD9/HEF1; within the complex NEDD9/HEF1 interacts (via N-terminus) with ITCH/AIP4; the complex mediates ubiquitination and proteasomal degradation of NEDD9/HEF1 (By similarity). Interacts with NEDD9; the interaction promotes NEDD9 ubiquitination and proteasomal degradation (By similarity). Interacts (via an N-terminal domain) with JUN (via its basic DNA binding and leucine zipper domains); this interaction is essential for DNA binding and cooperative transcriptional activity in response to TGF-beta (By similarity). Identified in a complex that contains at least ZNF451, SMAD2, SMAD3 and SMAD4 (By similarity). Interacts with PPM1A; the interaction dephosphorylates SMAD3 in the C-terminal SXS motif leading to disruption of the SMAD2/3-SMAD4 complex, nuclear export and termination of TGF-beta signaling (By similarity). Interacts (via MH2 domain) with ZMIZ1 (via SP-RING-type domain); in the TGF-beta signaling pathway increases the activity of the SMAD3/SMAD4 transcriptional complex (By similarity). Interacts (when phosphorylated) with RNF111; RNF111 acts as an enhancer of the transcriptional responses by mediating ubiquitination and degradation of SMAD3 inhibitors (By similarity). Interacts (dephosphorylated form via the MH1 and MH2 domains) with RANBP3 (via its C-terminal R domain); the interaction results in the export of dephosphorylated SMAD3 out of the nucleus and termination of the TGF-beta signaling (By similarity). Interacts (via MH2 domain) with LEMD3; the interaction represses SMAD3 transcriptional activity through preventing the formation of the heteromeric complex with SMAD4 and translocation to the nucleus (By similarity). Interacts (via the linker region) with EP300 (C-terminal); the interaction promotes SMAD3 acetylation and is enhanced by TGF-beta phosphorylation in the C-terminal of SMAD3 (By similarity). This interaction can be blocked by competitive binding of adenovirus oncoprotein E1A to the same C-terminal site on EP300, which then results in partially inhibited SMAD3/SMAD4 transcriptional activity (By similarity). Interacts with TGFBR1 (By similarity). Interacts with TGFB1I1 (By similarity). Interacts with PRDM16 (By similarity). Interacts with SNW1 (By similarity). Interacts (via MH2 domain) with ZFYVE9 (By similarity). Interacts with HDAC1 (By similarity). Interacts with TGIF2 (By similarity). Interacts with SKOR1 (By similarity). Interacts with SKOR2 (By similarity). Interacts with DACH1; the interaction inhibits the TGF-beta signaling (By similarity). Interacts with RBPMS (By similarity). Interacts (via MH2 domain) with MECOM (By similarity). Interacts with WWTR1 (via its coiled-coil domain) (By similarity). Interacts with SKI; the interaction represses SMAD3 transcriptional activity (By similarity). Interacts with MEN1 (By similarity). Interacts with IL1F7 (By similarity). Interaction with CSNK1G2 (By similarity). Interacts with PDPK1 (via PH domain) (By similarity). Interacts with DAB2; the interactions are enhanced upon TGF-beta stimulation (By similarity). Interacts with USP15 (By similarity). Interacts with PPP5C; the interaction decreases SMAD3 phosphorylation and protein levels (By similarity). Interacts with LDLRAD4 (via the SMAD interaction motif) (By similarity). Interacts with PMEPA1 (By similarity). Interacts with ZNF451 (By similarity). Interacts with ZFHX3 (By similarity). Interacts weakly with ZNF8 (By similarity). Interacts with STUB1, HSPA1A, HSPA1B, HSP90AA1 and HSP90AB1 (By similarity). Interacts with YAP1 (when phosphorylated at 'Ser-55') (By similarity). Interacts with MAGI2/ARIP1 (By similarity). Interacts (via MH2 domain) with CITED2 (via C-terminus) (By similarity). Interacts with HGS (By similarity). Interacts with WWP1 (By similarity). Interacts with TTRAP (By similarity). Interacts with FOXL2 (By similarity). Interacts with PML (By similarity). Interacts with NEDD4L; the interaction requires TGF-beta stimulation (By similarity). Interacts with ZC3H3 (By similarity). Interacts with TGIF. Interacts with CREBBP. Interacts with ATF2. Interacts with NEDD9; the interaction is inhibited by oxidation of NEDD9 (By similarity). Interacts with MTMR4; negatively regulates TGF-beta signaling through SMAD3 dephosphorylation and retention in endosomes (By similarity).</text>
</comment>
<comment type="subcellular location">
    <subcellularLocation>
        <location evidence="2">Cytoplasm</location>
    </subcellularLocation>
    <subcellularLocation>
        <location evidence="2">Nucleus</location>
    </subcellularLocation>
    <text evidence="2 4">Cytoplasmic and nuclear in the absence of TGF-beta (By similarity). On TGF-beta stimulation, migrates to the nucleus when complexed with SMAD4 (By similarity). Through the action of the phosphatase PPM1A, released from the SMAD2/SMAD4 complex, and exported out of the nucleus by interaction with RANBP1 (By similarity). Co-localizes with LEMD3 at the nucleus inner membrane (By similarity). MAPK-mediated phosphorylation appears to have no effect on nuclear import (By similarity). PDPK1 prevents its nuclear translocation in response to TGF-beta (By similarity). Localized mainly to the nucleus in the early stages of embryo development with expression becoming evident in the cytoplasm of the inner cell mass at the blastocyst stage (By similarity).</text>
</comment>
<comment type="tissue specificity">
    <text>Highly expressed in the brain and ovary. Detected in the pyramidal cells of the hippocampus, granule cells of the dentate gyrus, granular cells of the cerebral cortex and the granulosa cells of the ovary.</text>
</comment>
<comment type="domain">
    <text evidence="1">The MH1 domain is required for DNA binding (By similarity). Also binds zinc ions which are necessary for the DNA binding.</text>
</comment>
<comment type="domain">
    <text evidence="1">The MH2 domain is required for both homomeric and heteromeric interactions and for transcriptional regulation. Sufficient for nuclear import (By similarity).</text>
</comment>
<comment type="domain">
    <text evidence="1">The linker region is required for the TGFbeta-mediated transcriptional activity and acts synergistically with the MH2 domain.</text>
</comment>
<comment type="PTM">
    <text evidence="2">Phosphorylated on serine and threonine residues. Enhanced phosphorylation in the linker region on Thr-179, Ser-204 and Ser-208 on EGF and TGF-beta treatment. Ser-208 is the main site of MAPK-mediated phosphorylation. CDK-mediated phosphorylation occurs in a cell-cycle dependent manner and inhibits both the transcriptional activity and antiproliferative functions of SMAD3. This phosphorylation is inhibited by flavopiridol. Maximum phosphorylation at the G(1)/S junction. Also phosphorylated on serine residues in the C-terminal SXS motif by TGFBR1 and ACVR1. TGFBR1-mediated phosphorylation at these C-terminal sites is required for interaction with SMAD4, nuclear location and transactivational activity, and appears to be a prerequisite for the TGF-beta mediated phosphorylation in the linker region. Dephosphorylated in the C-terminal SXS motif by PPM1A. This dephosphorylation disrupts the interaction with SMAD4, promotes nuclear export and terminates TGF-beta-mediated signaling. Phosphorylation at Ser-418 by CSNK1G2/CK1 promotes ligand-dependent ubiquitination and subsequent proteasome degradation, thus inhibiting SMAD3-mediated TGF-beta responses. Phosphorylated by PDPK1 (By similarity).</text>
</comment>
<comment type="PTM">
    <text evidence="2">Acetylation in the nucleus by EP300 in the MH2 domain regulates positively its transcriptional activity and is enhanced by TGF-beta.</text>
</comment>
<comment type="PTM">
    <text evidence="2">Poly-ADP-ribosylated by PARP1 and PARP2. ADP-ribosylation negatively regulates SMAD3 transcriptional responses during the course of TGF-beta signaling.</text>
</comment>
<comment type="PTM">
    <text evidence="2 4">Ubiquitinated. Monoubiquitinated, leading to prevent DNA-binding. Deubiquitination by USP15 alleviates inhibition and promotes activation of TGF-beta target genes. Ubiquitinated by RNF111, leading to its degradation: only SMAD3 proteins that are 'in use' are targeted by RNF111, RNF111 playing a key role in activating SMAD3 and regulating its turnover. Undergoes STUB1-mediated ubiquitination and degradation.</text>
</comment>
<comment type="similarity">
    <text evidence="8">Belongs to the dwarfin/SMAD family.</text>
</comment>
<proteinExistence type="evidence at transcript level"/>
<protein>
    <recommendedName>
        <fullName>Mothers against decapentaplegic homolog 3</fullName>
        <shortName>MAD homolog 3</shortName>
        <shortName>Mad3</shortName>
        <shortName>Mothers against DPP homolog 3</shortName>
    </recommendedName>
    <alternativeName>
        <fullName>SMAD family member 3</fullName>
        <shortName>SMAD 3</shortName>
        <shortName>Smad3</shortName>
    </alternativeName>
</protein>
<sequence>MSSILPFTPPIVKRLLGWKKGEQNGQEEKWCEKAVKSLVKKLKKTGQLDELEKAITTQNVNTKCITIPRSLDGRLQVSHRKGLPHVIYCRLWRWPDLHSHHELRAMELCEFAFNMKKDEVCVNPYHYQRVETPVLPPVLVPRHTEIPAEFPPLDDYSHSIPENTNFPAGIEPQSNIPETPPPGYLSEDGETSDHQMNHSMDAGSPNLSPNPMSPAHNNLDLQPVTYCEPAFWCSISYYELNQRVGETFHASQPSMTVDGFTDPSNSERFCLGLLSNVNRNAAVELTRRHIGRGVRLYYIGGEVFAECLSDSAIFVQSPNCNQRYGWHPATVCKIPPGCNLKIFNNQEFAALLAQSVNQGFEAVYQLTRMCTIRMSFVKGWGAEYRRQTVTSTPCWIELHLNGPLQWLDKVLTQMGSPSIRCSSVS</sequence>
<organism>
    <name type="scientific">Sus scrofa</name>
    <name type="common">Pig</name>
    <dbReference type="NCBI Taxonomy" id="9823"/>
    <lineage>
        <taxon>Eukaryota</taxon>
        <taxon>Metazoa</taxon>
        <taxon>Chordata</taxon>
        <taxon>Craniata</taxon>
        <taxon>Vertebrata</taxon>
        <taxon>Euteleostomi</taxon>
        <taxon>Mammalia</taxon>
        <taxon>Eutheria</taxon>
        <taxon>Laurasiatheria</taxon>
        <taxon>Artiodactyla</taxon>
        <taxon>Suina</taxon>
        <taxon>Suidae</taxon>
        <taxon>Sus</taxon>
    </lineage>
</organism>
<name>SMAD3_PIG</name>
<gene>
    <name type="primary">SMAD3</name>
    <name type="synonym">MADH3</name>
</gene>
<dbReference type="EMBL" id="AB052738">
    <property type="protein sequence ID" value="BAB19634.1"/>
    <property type="molecule type" value="mRNA"/>
</dbReference>
<dbReference type="RefSeq" id="NP_999302.1">
    <property type="nucleotide sequence ID" value="NM_214137.1"/>
</dbReference>
<dbReference type="SMR" id="P84024"/>
<dbReference type="FunCoup" id="P84024">
    <property type="interactions" value="1395"/>
</dbReference>
<dbReference type="MINT" id="P84024"/>
<dbReference type="STRING" id="9823.ENSSSCP00000054408"/>
<dbReference type="PaxDb" id="9823-ENSSSCP00000005327"/>
<dbReference type="PeptideAtlas" id="P84024"/>
<dbReference type="Ensembl" id="ENSSSCT00000005464.5">
    <property type="protein sequence ID" value="ENSSSCP00000005327.3"/>
    <property type="gene ID" value="ENSSSCG00000004952.5"/>
</dbReference>
<dbReference type="Ensembl" id="ENSSSCT00015062164.1">
    <property type="protein sequence ID" value="ENSSSCP00015024943.1"/>
    <property type="gene ID" value="ENSSSCG00015045925.1"/>
</dbReference>
<dbReference type="Ensembl" id="ENSSSCT00025043673.1">
    <property type="protein sequence ID" value="ENSSSCP00025018565.1"/>
    <property type="gene ID" value="ENSSSCG00025032064.1"/>
</dbReference>
<dbReference type="Ensembl" id="ENSSSCT00030064740.1">
    <property type="protein sequence ID" value="ENSSSCP00030029587.1"/>
    <property type="gene ID" value="ENSSSCG00030046321.1"/>
</dbReference>
<dbReference type="Ensembl" id="ENSSSCT00035076339.1">
    <property type="protein sequence ID" value="ENSSSCP00035031189.1"/>
    <property type="gene ID" value="ENSSSCG00035057061.1"/>
</dbReference>
<dbReference type="Ensembl" id="ENSSSCT00040041424.1">
    <property type="protein sequence ID" value="ENSSSCP00040017352.1"/>
    <property type="gene ID" value="ENSSSCG00040030551.1"/>
</dbReference>
<dbReference type="Ensembl" id="ENSSSCT00045018396.1">
    <property type="protein sequence ID" value="ENSSSCP00045012692.1"/>
    <property type="gene ID" value="ENSSSCG00045010800.1"/>
</dbReference>
<dbReference type="Ensembl" id="ENSSSCT00050004607.1">
    <property type="protein sequence ID" value="ENSSSCP00050001837.1"/>
    <property type="gene ID" value="ENSSSCG00050003377.1"/>
</dbReference>
<dbReference type="Ensembl" id="ENSSSCT00055059976.1">
    <property type="protein sequence ID" value="ENSSSCP00055048056.1"/>
    <property type="gene ID" value="ENSSSCG00055030102.1"/>
</dbReference>
<dbReference type="Ensembl" id="ENSSSCT00060092092.1">
    <property type="protein sequence ID" value="ENSSSCP00060039794.1"/>
    <property type="gene ID" value="ENSSSCG00060067444.1"/>
</dbReference>
<dbReference type="Ensembl" id="ENSSSCT00070014919.1">
    <property type="protein sequence ID" value="ENSSSCP00070012342.1"/>
    <property type="gene ID" value="ENSSSCG00070007681.1"/>
</dbReference>
<dbReference type="Ensembl" id="ENSSSCT00115008855">
    <property type="protein sequence ID" value="ENSSSCP00115008318"/>
    <property type="gene ID" value="ENSSSCG00115005123"/>
</dbReference>
<dbReference type="GeneID" id="397260"/>
<dbReference type="KEGG" id="ssc:397260"/>
<dbReference type="CTD" id="4088"/>
<dbReference type="VGNC" id="VGNC:93217">
    <property type="gene designation" value="SMAD3"/>
</dbReference>
<dbReference type="eggNOG" id="KOG3701">
    <property type="taxonomic scope" value="Eukaryota"/>
</dbReference>
<dbReference type="GeneTree" id="ENSGT00940000153499"/>
<dbReference type="InParanoid" id="P84024"/>
<dbReference type="OMA" id="VENCRYS"/>
<dbReference type="OrthoDB" id="5794312at2759"/>
<dbReference type="Reactome" id="R-SSC-1181150">
    <property type="pathway name" value="Signaling by NODAL"/>
</dbReference>
<dbReference type="Reactome" id="R-SSC-1502540">
    <property type="pathway name" value="Signaling by Activin"/>
</dbReference>
<dbReference type="Reactome" id="R-SSC-2173788">
    <property type="pathway name" value="Downregulation of TGF-beta receptor signaling"/>
</dbReference>
<dbReference type="Reactome" id="R-SSC-2173789">
    <property type="pathway name" value="TGF-beta receptor signaling activates SMADs"/>
</dbReference>
<dbReference type="Reactome" id="R-SSC-2173795">
    <property type="pathway name" value="Downregulation of SMAD2/3:SMAD4 transcriptional activity"/>
</dbReference>
<dbReference type="Reactome" id="R-SSC-2173796">
    <property type="pathway name" value="SMAD2/SMAD3:SMAD4 heterotrimer regulates transcription"/>
</dbReference>
<dbReference type="Reactome" id="R-SSC-5689880">
    <property type="pathway name" value="Ub-specific processing proteases"/>
</dbReference>
<dbReference type="Reactome" id="R-SSC-8941855">
    <property type="pathway name" value="RUNX3 regulates CDKN1A transcription"/>
</dbReference>
<dbReference type="Reactome" id="R-SSC-9617828">
    <property type="pathway name" value="FOXO-mediated transcription of cell cycle genes"/>
</dbReference>
<dbReference type="Proteomes" id="UP000008227">
    <property type="component" value="Chromosome 1"/>
</dbReference>
<dbReference type="Proteomes" id="UP000314985">
    <property type="component" value="Chromosome 1"/>
</dbReference>
<dbReference type="Proteomes" id="UP000694570">
    <property type="component" value="Unplaced"/>
</dbReference>
<dbReference type="Proteomes" id="UP000694571">
    <property type="component" value="Unplaced"/>
</dbReference>
<dbReference type="Proteomes" id="UP000694720">
    <property type="component" value="Unplaced"/>
</dbReference>
<dbReference type="Proteomes" id="UP000694722">
    <property type="component" value="Unplaced"/>
</dbReference>
<dbReference type="Proteomes" id="UP000694723">
    <property type="component" value="Unplaced"/>
</dbReference>
<dbReference type="Proteomes" id="UP000694724">
    <property type="component" value="Unplaced"/>
</dbReference>
<dbReference type="Proteomes" id="UP000694725">
    <property type="component" value="Unplaced"/>
</dbReference>
<dbReference type="Proteomes" id="UP000694726">
    <property type="component" value="Unplaced"/>
</dbReference>
<dbReference type="Proteomes" id="UP000694727">
    <property type="component" value="Unplaced"/>
</dbReference>
<dbReference type="Proteomes" id="UP000694728">
    <property type="component" value="Unplaced"/>
</dbReference>
<dbReference type="Bgee" id="ENSSSCG00000004952">
    <property type="expression patterns" value="Expressed in muscle tissue and 45 other cell types or tissues"/>
</dbReference>
<dbReference type="ExpressionAtlas" id="P84024">
    <property type="expression patterns" value="baseline and differential"/>
</dbReference>
<dbReference type="GO" id="GO:0005737">
    <property type="term" value="C:cytoplasm"/>
    <property type="evidence" value="ECO:0000250"/>
    <property type="project" value="UniProtKB"/>
</dbReference>
<dbReference type="GO" id="GO:0071144">
    <property type="term" value="C:heteromeric SMAD protein complex"/>
    <property type="evidence" value="ECO:0000318"/>
    <property type="project" value="GO_Central"/>
</dbReference>
<dbReference type="GO" id="GO:0005634">
    <property type="term" value="C:nucleus"/>
    <property type="evidence" value="ECO:0000250"/>
    <property type="project" value="UniProtKB"/>
</dbReference>
<dbReference type="GO" id="GO:0071141">
    <property type="term" value="C:SMAD protein complex"/>
    <property type="evidence" value="ECO:0000250"/>
    <property type="project" value="UniProtKB"/>
</dbReference>
<dbReference type="GO" id="GO:0005667">
    <property type="term" value="C:transcription regulator complex"/>
    <property type="evidence" value="ECO:0000250"/>
    <property type="project" value="UniProtKB"/>
</dbReference>
<dbReference type="GO" id="GO:0000987">
    <property type="term" value="F:cis-regulatory region sequence-specific DNA binding"/>
    <property type="evidence" value="ECO:0000250"/>
    <property type="project" value="UniProtKB"/>
</dbReference>
<dbReference type="GO" id="GO:0003700">
    <property type="term" value="F:DNA-binding transcription factor activity"/>
    <property type="evidence" value="ECO:0000250"/>
    <property type="project" value="UniProtKB"/>
</dbReference>
<dbReference type="GO" id="GO:0000981">
    <property type="term" value="F:DNA-binding transcription factor activity, RNA polymerase II-specific"/>
    <property type="evidence" value="ECO:0000318"/>
    <property type="project" value="GO_Central"/>
</dbReference>
<dbReference type="GO" id="GO:0070411">
    <property type="term" value="F:I-SMAD binding"/>
    <property type="evidence" value="ECO:0000318"/>
    <property type="project" value="GO_Central"/>
</dbReference>
<dbReference type="GO" id="GO:0046872">
    <property type="term" value="F:metal ion binding"/>
    <property type="evidence" value="ECO:0007669"/>
    <property type="project" value="UniProtKB-KW"/>
</dbReference>
<dbReference type="GO" id="GO:0000978">
    <property type="term" value="F:RNA polymerase II cis-regulatory region sequence-specific DNA binding"/>
    <property type="evidence" value="ECO:0000318"/>
    <property type="project" value="GO_Central"/>
</dbReference>
<dbReference type="GO" id="GO:0032924">
    <property type="term" value="P:activin receptor signaling pathway"/>
    <property type="evidence" value="ECO:0000318"/>
    <property type="project" value="GO_Central"/>
</dbReference>
<dbReference type="GO" id="GO:0009653">
    <property type="term" value="P:anatomical structure morphogenesis"/>
    <property type="evidence" value="ECO:0000318"/>
    <property type="project" value="GO_Central"/>
</dbReference>
<dbReference type="GO" id="GO:0030154">
    <property type="term" value="P:cell differentiation"/>
    <property type="evidence" value="ECO:0000318"/>
    <property type="project" value="GO_Central"/>
</dbReference>
<dbReference type="GO" id="GO:0045944">
    <property type="term" value="P:positive regulation of transcription by RNA polymerase II"/>
    <property type="evidence" value="ECO:0000318"/>
    <property type="project" value="GO_Central"/>
</dbReference>
<dbReference type="GO" id="GO:0060395">
    <property type="term" value="P:SMAD protein signal transduction"/>
    <property type="evidence" value="ECO:0000318"/>
    <property type="project" value="GO_Central"/>
</dbReference>
<dbReference type="GO" id="GO:0007179">
    <property type="term" value="P:transforming growth factor beta receptor signaling pathway"/>
    <property type="evidence" value="ECO:0000250"/>
    <property type="project" value="UniProtKB"/>
</dbReference>
<dbReference type="CDD" id="cd10491">
    <property type="entry name" value="MH1_SMAD_2_3"/>
    <property type="match status" value="1"/>
</dbReference>
<dbReference type="CDD" id="cd10985">
    <property type="entry name" value="MH2_SMAD_2_3"/>
    <property type="match status" value="1"/>
</dbReference>
<dbReference type="FunFam" id="2.60.200.10:FF:000001">
    <property type="entry name" value="Mothers against decapentaplegic homolog"/>
    <property type="match status" value="1"/>
</dbReference>
<dbReference type="FunFam" id="3.90.520.10:FF:000001">
    <property type="entry name" value="Mothers against decapentaplegic homolog"/>
    <property type="match status" value="1"/>
</dbReference>
<dbReference type="Gene3D" id="2.60.200.10">
    <property type="match status" value="1"/>
</dbReference>
<dbReference type="Gene3D" id="3.90.520.10">
    <property type="entry name" value="SMAD MH1 domain"/>
    <property type="match status" value="1"/>
</dbReference>
<dbReference type="InterPro" id="IPR013790">
    <property type="entry name" value="Dwarfin"/>
</dbReference>
<dbReference type="InterPro" id="IPR003619">
    <property type="entry name" value="MAD_homology1_Dwarfin-type"/>
</dbReference>
<dbReference type="InterPro" id="IPR013019">
    <property type="entry name" value="MAD_homology_MH1"/>
</dbReference>
<dbReference type="InterPro" id="IPR017855">
    <property type="entry name" value="SMAD-like_dom_sf"/>
</dbReference>
<dbReference type="InterPro" id="IPR001132">
    <property type="entry name" value="SMAD_dom_Dwarfin-type"/>
</dbReference>
<dbReference type="InterPro" id="IPR008984">
    <property type="entry name" value="SMAD_FHA_dom_sf"/>
</dbReference>
<dbReference type="InterPro" id="IPR036578">
    <property type="entry name" value="SMAD_MH1_sf"/>
</dbReference>
<dbReference type="PANTHER" id="PTHR13703:SF53">
    <property type="entry name" value="MOTHERS AGAINST DECAPENTAPLEGIC HOMOLOG 3"/>
    <property type="match status" value="1"/>
</dbReference>
<dbReference type="PANTHER" id="PTHR13703">
    <property type="entry name" value="SMAD"/>
    <property type="match status" value="1"/>
</dbReference>
<dbReference type="Pfam" id="PF03165">
    <property type="entry name" value="MH1"/>
    <property type="match status" value="1"/>
</dbReference>
<dbReference type="Pfam" id="PF03166">
    <property type="entry name" value="MH2"/>
    <property type="match status" value="1"/>
</dbReference>
<dbReference type="SMART" id="SM00523">
    <property type="entry name" value="DWA"/>
    <property type="match status" value="1"/>
</dbReference>
<dbReference type="SMART" id="SM00524">
    <property type="entry name" value="DWB"/>
    <property type="match status" value="1"/>
</dbReference>
<dbReference type="SUPFAM" id="SSF56366">
    <property type="entry name" value="SMAD MH1 domain"/>
    <property type="match status" value="1"/>
</dbReference>
<dbReference type="SUPFAM" id="SSF49879">
    <property type="entry name" value="SMAD/FHA domain"/>
    <property type="match status" value="1"/>
</dbReference>
<dbReference type="PROSITE" id="PS51075">
    <property type="entry name" value="MH1"/>
    <property type="match status" value="1"/>
</dbReference>
<dbReference type="PROSITE" id="PS51076">
    <property type="entry name" value="MH2"/>
    <property type="match status" value="1"/>
</dbReference>
<keyword id="KW-0007">Acetylation</keyword>
<keyword id="KW-0013">ADP-ribosylation</keyword>
<keyword id="KW-0963">Cytoplasm</keyword>
<keyword id="KW-1017">Isopeptide bond</keyword>
<keyword id="KW-0479">Metal-binding</keyword>
<keyword id="KW-0539">Nucleus</keyword>
<keyword id="KW-0597">Phosphoprotein</keyword>
<keyword id="KW-1185">Reference proteome</keyword>
<keyword id="KW-0804">Transcription</keyword>
<keyword id="KW-0805">Transcription regulation</keyword>
<keyword id="KW-0832">Ubl conjugation</keyword>
<keyword id="KW-0862">Zinc</keyword>
<evidence type="ECO:0000250" key="1"/>
<evidence type="ECO:0000250" key="2">
    <source>
        <dbReference type="UniProtKB" id="P84022"/>
    </source>
</evidence>
<evidence type="ECO:0000250" key="3">
    <source>
        <dbReference type="UniProtKB" id="P84025"/>
    </source>
</evidence>
<evidence type="ECO:0000250" key="4">
    <source>
        <dbReference type="UniProtKB" id="Q8BUN5"/>
    </source>
</evidence>
<evidence type="ECO:0000255" key="5">
    <source>
        <dbReference type="PROSITE-ProRule" id="PRU00438"/>
    </source>
</evidence>
<evidence type="ECO:0000255" key="6">
    <source>
        <dbReference type="PROSITE-ProRule" id="PRU00439"/>
    </source>
</evidence>
<evidence type="ECO:0000256" key="7">
    <source>
        <dbReference type="SAM" id="MobiDB-lite"/>
    </source>
</evidence>
<evidence type="ECO:0000305" key="8"/>
<feature type="initiator methionine" description="Removed" evidence="2">
    <location>
        <position position="1"/>
    </location>
</feature>
<feature type="chain" id="PRO_0000090858" description="Mothers against decapentaplegic homolog 3">
    <location>
        <begin position="2"/>
        <end position="425"/>
    </location>
</feature>
<feature type="domain" description="MH1" evidence="5">
    <location>
        <begin position="10"/>
        <end position="136"/>
    </location>
</feature>
<feature type="domain" description="MH2" evidence="6">
    <location>
        <begin position="232"/>
        <end position="425"/>
    </location>
</feature>
<feature type="region of interest" description="Linker">
    <location>
        <begin position="137"/>
        <end position="231"/>
    </location>
</feature>
<feature type="region of interest" description="Disordered" evidence="7">
    <location>
        <begin position="165"/>
        <end position="208"/>
    </location>
</feature>
<feature type="region of interest" description="Sufficient for interaction with XPO4" evidence="1">
    <location>
        <begin position="271"/>
        <end position="324"/>
    </location>
</feature>
<feature type="compositionally biased region" description="Polar residues" evidence="7">
    <location>
        <begin position="165"/>
        <end position="177"/>
    </location>
</feature>
<feature type="binding site" evidence="1">
    <location>
        <position position="64"/>
    </location>
    <ligand>
        <name>Zn(2+)</name>
        <dbReference type="ChEBI" id="CHEBI:29105"/>
    </ligand>
</feature>
<feature type="binding site" evidence="1">
    <location>
        <position position="109"/>
    </location>
    <ligand>
        <name>Zn(2+)</name>
        <dbReference type="ChEBI" id="CHEBI:29105"/>
    </ligand>
</feature>
<feature type="binding site" evidence="1">
    <location>
        <position position="121"/>
    </location>
    <ligand>
        <name>Zn(2+)</name>
        <dbReference type="ChEBI" id="CHEBI:29105"/>
    </ligand>
</feature>
<feature type="binding site" evidence="1">
    <location>
        <position position="126"/>
    </location>
    <ligand>
        <name>Zn(2+)</name>
        <dbReference type="ChEBI" id="CHEBI:29105"/>
    </ligand>
</feature>
<feature type="site" description="Required for trimerization" evidence="1">
    <location>
        <position position="40"/>
    </location>
</feature>
<feature type="site" description="Required for interaction with DNA and JUN and for functional cooperation with JUN" evidence="1">
    <location>
        <position position="41"/>
    </location>
</feature>
<feature type="modified residue" description="N-acetylserine" evidence="2">
    <location>
        <position position="2"/>
    </location>
</feature>
<feature type="modified residue" description="Phosphothreonine; by CDK2 and CDK4" evidence="2">
    <location>
        <position position="8"/>
    </location>
</feature>
<feature type="modified residue" description="Phosphothreonine; by CDK2, CDK4 and MAPK" evidence="2">
    <location>
        <position position="179"/>
    </location>
</feature>
<feature type="modified residue" description="Phosphoserine; by GSK3 and MAPK" evidence="2 6">
    <location>
        <position position="204"/>
    </location>
</feature>
<feature type="modified residue" description="Phosphoserine; by MAPK" evidence="2 6">
    <location>
        <position position="208"/>
    </location>
</feature>
<feature type="modified residue" description="Phosphoserine; by CDK2 and CDK4" evidence="2 6">
    <location>
        <position position="213"/>
    </location>
</feature>
<feature type="modified residue" description="N6-acetyllysine" evidence="2">
    <location>
        <position position="378"/>
    </location>
</feature>
<feature type="modified residue" description="Phosphoserine" evidence="2 6">
    <location>
        <position position="416"/>
    </location>
</feature>
<feature type="modified residue" description="Phosphoserine; by CK1" evidence="2 6">
    <location>
        <position position="418"/>
    </location>
</feature>
<feature type="modified residue" description="Phosphoserine; by TGFBR1" evidence="4 6">
    <location>
        <position position="422"/>
    </location>
</feature>
<feature type="modified residue" description="Phosphoserine; by TGFBR1" evidence="4 6">
    <location>
        <position position="423"/>
    </location>
</feature>
<feature type="modified residue" description="Phosphoserine; by TGFBR1" evidence="4 6">
    <location>
        <position position="425"/>
    </location>
</feature>
<feature type="cross-link" description="Glycyl lysine isopeptide (Lys-Gly) (interchain with G-Cter in ubiquitin)" evidence="2">
    <location>
        <position position="33"/>
    </location>
</feature>
<feature type="cross-link" description="Glycyl lysine isopeptide (Lys-Gly) (interchain with G-Cter in ubiquitin)" evidence="2">
    <location>
        <position position="81"/>
    </location>
</feature>
<accession>P84024</accession>
<accession>O09064</accession>
<accession>O09144</accession>
<accession>O14510</accession>
<accession>O35273</accession>
<accession>Q92940</accession>
<accession>Q93002</accession>
<accession>Q9GKR4</accession>
<reference key="1">
    <citation type="submission" date="2000-12" db="EMBL/GenBank/DDBJ databases">
        <authorList>
            <person name="Yoshiyasu I."/>
            <person name="Takashi A."/>
            <person name="Ito Y."/>
            <person name="Awata T."/>
        </authorList>
    </citation>
    <scope>NUCLEOTIDE SEQUENCE [MRNA]</scope>
    <source>
        <tissue>Muscle</tissue>
    </source>
</reference>